<proteinExistence type="inferred from homology"/>
<organism>
    <name type="scientific">Pectobacterium atrosepticum (strain SCRI 1043 / ATCC BAA-672)</name>
    <name type="common">Erwinia carotovora subsp. atroseptica</name>
    <dbReference type="NCBI Taxonomy" id="218491"/>
    <lineage>
        <taxon>Bacteria</taxon>
        <taxon>Pseudomonadati</taxon>
        <taxon>Pseudomonadota</taxon>
        <taxon>Gammaproteobacteria</taxon>
        <taxon>Enterobacterales</taxon>
        <taxon>Pectobacteriaceae</taxon>
        <taxon>Pectobacterium</taxon>
    </lineage>
</organism>
<evidence type="ECO:0000255" key="1">
    <source>
        <dbReference type="HAMAP-Rule" id="MF_01183"/>
    </source>
</evidence>
<sequence length="431" mass="47498">MKNWRTLILGLALSASTAFAAPQVVDKVAAVVDNSVVLESDVNSLLQSVKLNAQQAGQQLPDDATLRHQITDRLIMDNIILQMAQKMGIQVTDEQLDQAITNIAAQNRMSIDQLKSQLANEGLNYNTYRSQIRKEMLISEVRNNEVRRRVTVLPQEVDTLAKQIANQTGENDELNLSHILLPLPENPTQQQVDEAENLATSLVKQISEGADFGKLAITYSSDSQALKGGQMGWGKLQEIPTLFAERLTQVQKGQVVGPIRSGVGFHILKVNDIRGGNKSVSVTETHARHILIKPSVVMTDSQAQAKLADVAQQIKNGSTDFAAQAKLLSQDPGSANQGGDLGWASPDMYDPAFRDALLKLKKGEISQPIHSSFGWHLIQLLDTRQVDKTDAAQKEQAYRMIFNRKFAEEAQTWMQEQRAAAYVKVINGATN</sequence>
<protein>
    <recommendedName>
        <fullName evidence="1">Chaperone SurA</fullName>
    </recommendedName>
    <alternativeName>
        <fullName evidence="1">Peptidyl-prolyl cis-trans isomerase SurA</fullName>
        <shortName evidence="1">PPIase SurA</shortName>
        <ecNumber evidence="1">5.2.1.8</ecNumber>
    </alternativeName>
    <alternativeName>
        <fullName evidence="1">Rotamase SurA</fullName>
    </alternativeName>
</protein>
<feature type="signal peptide" evidence="1">
    <location>
        <begin position="1"/>
        <end position="20"/>
    </location>
</feature>
<feature type="chain" id="PRO_0000270013" description="Chaperone SurA">
    <location>
        <begin position="21"/>
        <end position="431"/>
    </location>
</feature>
<feature type="domain" description="PpiC 1" evidence="1">
    <location>
        <begin position="171"/>
        <end position="272"/>
    </location>
</feature>
<feature type="domain" description="PpiC 2" evidence="1">
    <location>
        <begin position="282"/>
        <end position="382"/>
    </location>
</feature>
<comment type="function">
    <text evidence="1">Chaperone involved in the correct folding and assembly of outer membrane proteins. Recognizes specific patterns of aromatic residues and the orientation of their side chains, which are found more frequently in integral outer membrane proteins. May act in both early periplasmic and late outer membrane-associated steps of protein maturation.</text>
</comment>
<comment type="catalytic activity">
    <reaction evidence="1">
        <text>[protein]-peptidylproline (omega=180) = [protein]-peptidylproline (omega=0)</text>
        <dbReference type="Rhea" id="RHEA:16237"/>
        <dbReference type="Rhea" id="RHEA-COMP:10747"/>
        <dbReference type="Rhea" id="RHEA-COMP:10748"/>
        <dbReference type="ChEBI" id="CHEBI:83833"/>
        <dbReference type="ChEBI" id="CHEBI:83834"/>
        <dbReference type="EC" id="5.2.1.8"/>
    </reaction>
</comment>
<comment type="subcellular location">
    <subcellularLocation>
        <location evidence="1">Periplasm</location>
    </subcellularLocation>
    <text evidence="1">Is capable of associating with the outer membrane.</text>
</comment>
<comment type="domain">
    <text evidence="1">The PPIase activity resides only in the second parvulin domain. The N-terminal region and the C-terminal tail are necessary and sufficient for the chaperone activity of SurA. The PPIase activity is dispensable for SurA to function as a chaperone. The N-terminal region and the C-terminal tail are also required for porin recognition.</text>
</comment>
<gene>
    <name evidence="1" type="primary">surA</name>
    <name type="ordered locus">ECA3857</name>
</gene>
<name>SURA_PECAS</name>
<keyword id="KW-0143">Chaperone</keyword>
<keyword id="KW-0413">Isomerase</keyword>
<keyword id="KW-0574">Periplasm</keyword>
<keyword id="KW-1185">Reference proteome</keyword>
<keyword id="KW-0677">Repeat</keyword>
<keyword id="KW-0697">Rotamase</keyword>
<keyword id="KW-0732">Signal</keyword>
<reference key="1">
    <citation type="journal article" date="2004" name="Proc. Natl. Acad. Sci. U.S.A.">
        <title>Genome sequence of the enterobacterial phytopathogen Erwinia carotovora subsp. atroseptica and characterization of virulence factors.</title>
        <authorList>
            <person name="Bell K.S."/>
            <person name="Sebaihia M."/>
            <person name="Pritchard L."/>
            <person name="Holden M.T.G."/>
            <person name="Hyman L.J."/>
            <person name="Holeva M.C."/>
            <person name="Thomson N.R."/>
            <person name="Bentley S.D."/>
            <person name="Churcher L.J.C."/>
            <person name="Mungall K."/>
            <person name="Atkin R."/>
            <person name="Bason N."/>
            <person name="Brooks K."/>
            <person name="Chillingworth T."/>
            <person name="Clark K."/>
            <person name="Doggett J."/>
            <person name="Fraser A."/>
            <person name="Hance Z."/>
            <person name="Hauser H."/>
            <person name="Jagels K."/>
            <person name="Moule S."/>
            <person name="Norbertczak H."/>
            <person name="Ormond D."/>
            <person name="Price C."/>
            <person name="Quail M.A."/>
            <person name="Sanders M."/>
            <person name="Walker D."/>
            <person name="Whitehead S."/>
            <person name="Salmond G.P.C."/>
            <person name="Birch P.R.J."/>
            <person name="Parkhill J."/>
            <person name="Toth I.K."/>
        </authorList>
    </citation>
    <scope>NUCLEOTIDE SEQUENCE [LARGE SCALE GENOMIC DNA]</scope>
    <source>
        <strain>SCRI 1043 / ATCC BAA-672</strain>
    </source>
</reference>
<dbReference type="EC" id="5.2.1.8" evidence="1"/>
<dbReference type="EMBL" id="BX950851">
    <property type="protein sequence ID" value="CAG76755.1"/>
    <property type="molecule type" value="Genomic_DNA"/>
</dbReference>
<dbReference type="RefSeq" id="WP_011095355.1">
    <property type="nucleotide sequence ID" value="NC_004547.2"/>
</dbReference>
<dbReference type="SMR" id="Q6D0E2"/>
<dbReference type="STRING" id="218491.ECA3857"/>
<dbReference type="KEGG" id="eca:ECA3857"/>
<dbReference type="PATRIC" id="fig|218491.5.peg.3912"/>
<dbReference type="eggNOG" id="COG0760">
    <property type="taxonomic scope" value="Bacteria"/>
</dbReference>
<dbReference type="HOGENOM" id="CLU_034646_11_0_6"/>
<dbReference type="OrthoDB" id="14196at2"/>
<dbReference type="Proteomes" id="UP000007966">
    <property type="component" value="Chromosome"/>
</dbReference>
<dbReference type="GO" id="GO:0030288">
    <property type="term" value="C:outer membrane-bounded periplasmic space"/>
    <property type="evidence" value="ECO:0007669"/>
    <property type="project" value="InterPro"/>
</dbReference>
<dbReference type="GO" id="GO:0042277">
    <property type="term" value="F:peptide binding"/>
    <property type="evidence" value="ECO:0007669"/>
    <property type="project" value="InterPro"/>
</dbReference>
<dbReference type="GO" id="GO:0003755">
    <property type="term" value="F:peptidyl-prolyl cis-trans isomerase activity"/>
    <property type="evidence" value="ECO:0007669"/>
    <property type="project" value="UniProtKB-UniRule"/>
</dbReference>
<dbReference type="GO" id="GO:0051082">
    <property type="term" value="F:unfolded protein binding"/>
    <property type="evidence" value="ECO:0007669"/>
    <property type="project" value="UniProtKB-UniRule"/>
</dbReference>
<dbReference type="GO" id="GO:0043165">
    <property type="term" value="P:Gram-negative-bacterium-type cell outer membrane assembly"/>
    <property type="evidence" value="ECO:0007669"/>
    <property type="project" value="InterPro"/>
</dbReference>
<dbReference type="GO" id="GO:0006457">
    <property type="term" value="P:protein folding"/>
    <property type="evidence" value="ECO:0007669"/>
    <property type="project" value="UniProtKB-UniRule"/>
</dbReference>
<dbReference type="GO" id="GO:0050821">
    <property type="term" value="P:protein stabilization"/>
    <property type="evidence" value="ECO:0007669"/>
    <property type="project" value="InterPro"/>
</dbReference>
<dbReference type="Gene3D" id="3.10.50.40">
    <property type="match status" value="2"/>
</dbReference>
<dbReference type="Gene3D" id="1.10.4030.10">
    <property type="entry name" value="Porin chaperone SurA, peptide-binding domain"/>
    <property type="match status" value="1"/>
</dbReference>
<dbReference type="HAMAP" id="MF_01183">
    <property type="entry name" value="Chaperone_SurA"/>
    <property type="match status" value="1"/>
</dbReference>
<dbReference type="InterPro" id="IPR050280">
    <property type="entry name" value="OMP_Chaperone_SurA"/>
</dbReference>
<dbReference type="InterPro" id="IPR046357">
    <property type="entry name" value="PPIase_dom_sf"/>
</dbReference>
<dbReference type="InterPro" id="IPR000297">
    <property type="entry name" value="PPIase_PpiC"/>
</dbReference>
<dbReference type="InterPro" id="IPR023058">
    <property type="entry name" value="PPIase_PpiC_CS"/>
</dbReference>
<dbReference type="InterPro" id="IPR023034">
    <property type="entry name" value="PPIase_SurA"/>
</dbReference>
<dbReference type="InterPro" id="IPR015391">
    <property type="entry name" value="SurA_N"/>
</dbReference>
<dbReference type="InterPro" id="IPR027304">
    <property type="entry name" value="Trigger_fact/SurA_dom_sf"/>
</dbReference>
<dbReference type="NCBIfam" id="NF008038">
    <property type="entry name" value="PRK10770.1"/>
    <property type="match status" value="1"/>
</dbReference>
<dbReference type="PANTHER" id="PTHR47637">
    <property type="entry name" value="CHAPERONE SURA"/>
    <property type="match status" value="1"/>
</dbReference>
<dbReference type="PANTHER" id="PTHR47637:SF1">
    <property type="entry name" value="CHAPERONE SURA"/>
    <property type="match status" value="1"/>
</dbReference>
<dbReference type="Pfam" id="PF00639">
    <property type="entry name" value="Rotamase"/>
    <property type="match status" value="1"/>
</dbReference>
<dbReference type="Pfam" id="PF13616">
    <property type="entry name" value="Rotamase_3"/>
    <property type="match status" value="1"/>
</dbReference>
<dbReference type="Pfam" id="PF09312">
    <property type="entry name" value="SurA_N"/>
    <property type="match status" value="1"/>
</dbReference>
<dbReference type="SUPFAM" id="SSF54534">
    <property type="entry name" value="FKBP-like"/>
    <property type="match status" value="2"/>
</dbReference>
<dbReference type="SUPFAM" id="SSF109998">
    <property type="entry name" value="Triger factor/SurA peptide-binding domain-like"/>
    <property type="match status" value="1"/>
</dbReference>
<dbReference type="PROSITE" id="PS01096">
    <property type="entry name" value="PPIC_PPIASE_1"/>
    <property type="match status" value="2"/>
</dbReference>
<dbReference type="PROSITE" id="PS50198">
    <property type="entry name" value="PPIC_PPIASE_2"/>
    <property type="match status" value="2"/>
</dbReference>
<accession>Q6D0E2</accession>